<comment type="function">
    <text evidence="1">Catalyzes the attachment of glutamate to tRNA(Glu) in a two-step reaction: glutamate is first activated by ATP to form Glu-AMP and then transferred to the acceptor end of tRNA(Glu).</text>
</comment>
<comment type="catalytic activity">
    <reaction evidence="1">
        <text>tRNA(Glu) + L-glutamate + ATP = L-glutamyl-tRNA(Glu) + AMP + diphosphate</text>
        <dbReference type="Rhea" id="RHEA:23540"/>
        <dbReference type="Rhea" id="RHEA-COMP:9663"/>
        <dbReference type="Rhea" id="RHEA-COMP:9680"/>
        <dbReference type="ChEBI" id="CHEBI:29985"/>
        <dbReference type="ChEBI" id="CHEBI:30616"/>
        <dbReference type="ChEBI" id="CHEBI:33019"/>
        <dbReference type="ChEBI" id="CHEBI:78442"/>
        <dbReference type="ChEBI" id="CHEBI:78520"/>
        <dbReference type="ChEBI" id="CHEBI:456215"/>
        <dbReference type="EC" id="6.1.1.17"/>
    </reaction>
</comment>
<comment type="cofactor">
    <cofactor evidence="1">
        <name>Zn(2+)</name>
        <dbReference type="ChEBI" id="CHEBI:29105"/>
    </cofactor>
    <text evidence="1">Binds 1 zinc ion per subunit.</text>
</comment>
<comment type="subunit">
    <text evidence="1">Monomer.</text>
</comment>
<comment type="subcellular location">
    <subcellularLocation>
        <location evidence="1">Cytoplasm</location>
    </subcellularLocation>
</comment>
<comment type="similarity">
    <text evidence="1">Belongs to the class-I aminoacyl-tRNA synthetase family. Glutamate--tRNA ligase type 1 subfamily.</text>
</comment>
<name>SYE_LEPBP</name>
<dbReference type="EC" id="6.1.1.17" evidence="1"/>
<dbReference type="EMBL" id="CP000786">
    <property type="protein sequence ID" value="ABZ96809.1"/>
    <property type="molecule type" value="Genomic_DNA"/>
</dbReference>
<dbReference type="RefSeq" id="WP_012387696.1">
    <property type="nucleotide sequence ID" value="NC_010602.1"/>
</dbReference>
<dbReference type="SMR" id="B0SKQ2"/>
<dbReference type="STRING" id="456481.LEPBI_I0677"/>
<dbReference type="KEGG" id="lbi:LEPBI_I0677"/>
<dbReference type="HOGENOM" id="CLU_015768_6_3_12"/>
<dbReference type="OrthoDB" id="9807503at2"/>
<dbReference type="BioCyc" id="LBIF456481:LEPBI_RS03330-MONOMER"/>
<dbReference type="Proteomes" id="UP000001847">
    <property type="component" value="Chromosome I"/>
</dbReference>
<dbReference type="GO" id="GO:0005829">
    <property type="term" value="C:cytosol"/>
    <property type="evidence" value="ECO:0007669"/>
    <property type="project" value="TreeGrafter"/>
</dbReference>
<dbReference type="GO" id="GO:0005524">
    <property type="term" value="F:ATP binding"/>
    <property type="evidence" value="ECO:0007669"/>
    <property type="project" value="UniProtKB-UniRule"/>
</dbReference>
<dbReference type="GO" id="GO:0004818">
    <property type="term" value="F:glutamate-tRNA ligase activity"/>
    <property type="evidence" value="ECO:0007669"/>
    <property type="project" value="UniProtKB-UniRule"/>
</dbReference>
<dbReference type="GO" id="GO:0000049">
    <property type="term" value="F:tRNA binding"/>
    <property type="evidence" value="ECO:0007669"/>
    <property type="project" value="InterPro"/>
</dbReference>
<dbReference type="GO" id="GO:0008270">
    <property type="term" value="F:zinc ion binding"/>
    <property type="evidence" value="ECO:0007669"/>
    <property type="project" value="UniProtKB-UniRule"/>
</dbReference>
<dbReference type="GO" id="GO:0006424">
    <property type="term" value="P:glutamyl-tRNA aminoacylation"/>
    <property type="evidence" value="ECO:0007669"/>
    <property type="project" value="UniProtKB-UniRule"/>
</dbReference>
<dbReference type="CDD" id="cd00808">
    <property type="entry name" value="GluRS_core"/>
    <property type="match status" value="1"/>
</dbReference>
<dbReference type="FunFam" id="3.40.50.620:FF:000045">
    <property type="entry name" value="Glutamate--tRNA ligase, mitochondrial"/>
    <property type="match status" value="1"/>
</dbReference>
<dbReference type="Gene3D" id="1.10.10.350">
    <property type="match status" value="1"/>
</dbReference>
<dbReference type="Gene3D" id="3.40.50.620">
    <property type="entry name" value="HUPs"/>
    <property type="match status" value="1"/>
</dbReference>
<dbReference type="HAMAP" id="MF_00022">
    <property type="entry name" value="Glu_tRNA_synth_type1"/>
    <property type="match status" value="1"/>
</dbReference>
<dbReference type="InterPro" id="IPR045462">
    <property type="entry name" value="aa-tRNA-synth_I_cd-bd"/>
</dbReference>
<dbReference type="InterPro" id="IPR020751">
    <property type="entry name" value="aa-tRNA-synth_I_codon-bd_sub2"/>
</dbReference>
<dbReference type="InterPro" id="IPR001412">
    <property type="entry name" value="aa-tRNA-synth_I_CS"/>
</dbReference>
<dbReference type="InterPro" id="IPR008925">
    <property type="entry name" value="aa_tRNA-synth_I_cd-bd_sf"/>
</dbReference>
<dbReference type="InterPro" id="IPR004527">
    <property type="entry name" value="Glu-tRNA-ligase_bac/mito"/>
</dbReference>
<dbReference type="InterPro" id="IPR000924">
    <property type="entry name" value="Glu/Gln-tRNA-synth"/>
</dbReference>
<dbReference type="InterPro" id="IPR020058">
    <property type="entry name" value="Glu/Gln-tRNA-synth_Ib_cat-dom"/>
</dbReference>
<dbReference type="InterPro" id="IPR049940">
    <property type="entry name" value="GluQ/Sye"/>
</dbReference>
<dbReference type="InterPro" id="IPR033910">
    <property type="entry name" value="GluRS_core"/>
</dbReference>
<dbReference type="InterPro" id="IPR014729">
    <property type="entry name" value="Rossmann-like_a/b/a_fold"/>
</dbReference>
<dbReference type="NCBIfam" id="TIGR00464">
    <property type="entry name" value="gltX_bact"/>
    <property type="match status" value="1"/>
</dbReference>
<dbReference type="PANTHER" id="PTHR43311">
    <property type="entry name" value="GLUTAMATE--TRNA LIGASE"/>
    <property type="match status" value="1"/>
</dbReference>
<dbReference type="PANTHER" id="PTHR43311:SF2">
    <property type="entry name" value="GLUTAMATE--TRNA LIGASE, MITOCHONDRIAL-RELATED"/>
    <property type="match status" value="1"/>
</dbReference>
<dbReference type="Pfam" id="PF19269">
    <property type="entry name" value="Anticodon_2"/>
    <property type="match status" value="1"/>
</dbReference>
<dbReference type="Pfam" id="PF00749">
    <property type="entry name" value="tRNA-synt_1c"/>
    <property type="match status" value="1"/>
</dbReference>
<dbReference type="PRINTS" id="PR00987">
    <property type="entry name" value="TRNASYNTHGLU"/>
</dbReference>
<dbReference type="SUPFAM" id="SSF48163">
    <property type="entry name" value="An anticodon-binding domain of class I aminoacyl-tRNA synthetases"/>
    <property type="match status" value="1"/>
</dbReference>
<dbReference type="SUPFAM" id="SSF52374">
    <property type="entry name" value="Nucleotidylyl transferase"/>
    <property type="match status" value="1"/>
</dbReference>
<dbReference type="PROSITE" id="PS00178">
    <property type="entry name" value="AA_TRNA_LIGASE_I"/>
    <property type="match status" value="1"/>
</dbReference>
<reference key="1">
    <citation type="journal article" date="2008" name="PLoS ONE">
        <title>Genome sequence of the saprophyte Leptospira biflexa provides insights into the evolution of Leptospira and the pathogenesis of leptospirosis.</title>
        <authorList>
            <person name="Picardeau M."/>
            <person name="Bulach D.M."/>
            <person name="Bouchier C."/>
            <person name="Zuerner R.L."/>
            <person name="Zidane N."/>
            <person name="Wilson P.J."/>
            <person name="Creno S."/>
            <person name="Kuczek E.S."/>
            <person name="Bommezzadri S."/>
            <person name="Davis J.C."/>
            <person name="McGrath A."/>
            <person name="Johnson M.J."/>
            <person name="Boursaux-Eude C."/>
            <person name="Seemann T."/>
            <person name="Rouy Z."/>
            <person name="Coppel R.L."/>
            <person name="Rood J.I."/>
            <person name="Lajus A."/>
            <person name="Davies J.K."/>
            <person name="Medigue C."/>
            <person name="Adler B."/>
        </authorList>
    </citation>
    <scope>NUCLEOTIDE SEQUENCE [LARGE SCALE GENOMIC DNA]</scope>
    <source>
        <strain>Patoc 1 / ATCC 23582 / Paris</strain>
    </source>
</reference>
<organism>
    <name type="scientific">Leptospira biflexa serovar Patoc (strain Patoc 1 / ATCC 23582 / Paris)</name>
    <dbReference type="NCBI Taxonomy" id="456481"/>
    <lineage>
        <taxon>Bacteria</taxon>
        <taxon>Pseudomonadati</taxon>
        <taxon>Spirochaetota</taxon>
        <taxon>Spirochaetia</taxon>
        <taxon>Leptospirales</taxon>
        <taxon>Leptospiraceae</taxon>
        <taxon>Leptospira</taxon>
    </lineage>
</organism>
<protein>
    <recommendedName>
        <fullName evidence="1">Glutamate--tRNA ligase</fullName>
        <ecNumber evidence="1">6.1.1.17</ecNumber>
    </recommendedName>
    <alternativeName>
        <fullName evidence="1">Glutamyl-tRNA synthetase</fullName>
        <shortName evidence="1">GluRS</shortName>
    </alternativeName>
</protein>
<sequence length="517" mass="58314">MTEVRTRFAPSPSGFLHVGGARTALFNYLYAKAKKGKFLLRIEDTDQDRSTEASFKIILESLKWLGMEWDEGPGVGGPNGPYTQSERIHIYKEYTDKLIQEKKAYRCFCTAEELEGKKKQADAMGIPYIYDGKCSDLSDAEIGSQLEKKIPFTVRFKTPHKIVIVDDMIQGKVKFESKLIGDFIIVKSDGFPSYNYAVVIDDALMKITHVIRGVGHLSNTPRQILIFEAFGFPLPRFAHASEIVGTDGKKLSKRAGATSVLAFRDLGYSSETMRNYMALLGWTSPDGKEYMSDEELCSVFDVERCSKSPATFDVFKKLKEEEKESVDFNKLTILGLAEYLNPKSKLNWMSNKYIRDTKIETLGKALEPFLKDCQIPEAFKSGENPQLLSILDSVRVYLDRLIQAPPYIEEFFLENLSFENDEAKQLVLEGKGKEVVAEFYRIVKESSLTTPDAYKESMAKVGEITGEKGRTLFMPIRAITTGKSHGLELPILFSLLGQEKMVKRMEQLAGILGISLR</sequence>
<keyword id="KW-0030">Aminoacyl-tRNA synthetase</keyword>
<keyword id="KW-0067">ATP-binding</keyword>
<keyword id="KW-0963">Cytoplasm</keyword>
<keyword id="KW-0436">Ligase</keyword>
<keyword id="KW-0479">Metal-binding</keyword>
<keyword id="KW-0547">Nucleotide-binding</keyword>
<keyword id="KW-0648">Protein biosynthesis</keyword>
<keyword id="KW-1185">Reference proteome</keyword>
<keyword id="KW-0862">Zinc</keyword>
<gene>
    <name evidence="1" type="primary">gltX</name>
    <name type="ordered locus">LEPBI_I0677</name>
</gene>
<evidence type="ECO:0000255" key="1">
    <source>
        <dbReference type="HAMAP-Rule" id="MF_00022"/>
    </source>
</evidence>
<proteinExistence type="inferred from homology"/>
<accession>B0SKQ2</accession>
<feature type="chain" id="PRO_0000367700" description="Glutamate--tRNA ligase">
    <location>
        <begin position="1"/>
        <end position="517"/>
    </location>
</feature>
<feature type="short sequence motif" description="'HIGH' region" evidence="1">
    <location>
        <begin position="10"/>
        <end position="20"/>
    </location>
</feature>
<feature type="short sequence motif" description="'KMSKS' region" evidence="1">
    <location>
        <begin position="250"/>
        <end position="254"/>
    </location>
</feature>
<feature type="binding site" evidence="1">
    <location>
        <position position="107"/>
    </location>
    <ligand>
        <name>Zn(2+)</name>
        <dbReference type="ChEBI" id="CHEBI:29105"/>
    </ligand>
</feature>
<feature type="binding site" evidence="1">
    <location>
        <position position="109"/>
    </location>
    <ligand>
        <name>Zn(2+)</name>
        <dbReference type="ChEBI" id="CHEBI:29105"/>
    </ligand>
</feature>
<feature type="binding site" evidence="1">
    <location>
        <position position="134"/>
    </location>
    <ligand>
        <name>Zn(2+)</name>
        <dbReference type="ChEBI" id="CHEBI:29105"/>
    </ligand>
</feature>
<feature type="binding site" evidence="1">
    <location>
        <position position="136"/>
    </location>
    <ligand>
        <name>Zn(2+)</name>
        <dbReference type="ChEBI" id="CHEBI:29105"/>
    </ligand>
</feature>
<feature type="binding site" evidence="1">
    <location>
        <position position="253"/>
    </location>
    <ligand>
        <name>ATP</name>
        <dbReference type="ChEBI" id="CHEBI:30616"/>
    </ligand>
</feature>